<organism>
    <name type="scientific">Acidothermus cellulolyticus (strain ATCC 43068 / DSM 8971 / 11B)</name>
    <dbReference type="NCBI Taxonomy" id="351607"/>
    <lineage>
        <taxon>Bacteria</taxon>
        <taxon>Bacillati</taxon>
        <taxon>Actinomycetota</taxon>
        <taxon>Actinomycetes</taxon>
        <taxon>Acidothermales</taxon>
        <taxon>Acidothermaceae</taxon>
        <taxon>Acidothermus</taxon>
    </lineage>
</organism>
<feature type="chain" id="PRO_0000381174" description="Biotin synthase">
    <location>
        <begin position="1"/>
        <end position="335"/>
    </location>
</feature>
<feature type="domain" description="Radical SAM core" evidence="2">
    <location>
        <begin position="53"/>
        <end position="276"/>
    </location>
</feature>
<feature type="binding site" evidence="1">
    <location>
        <position position="66"/>
    </location>
    <ligand>
        <name>[4Fe-4S] cluster</name>
        <dbReference type="ChEBI" id="CHEBI:49883"/>
        <note>4Fe-4S-S-AdoMet</note>
    </ligand>
</feature>
<feature type="binding site" evidence="1">
    <location>
        <position position="70"/>
    </location>
    <ligand>
        <name>[4Fe-4S] cluster</name>
        <dbReference type="ChEBI" id="CHEBI:49883"/>
        <note>4Fe-4S-S-AdoMet</note>
    </ligand>
</feature>
<feature type="binding site" evidence="1">
    <location>
        <position position="73"/>
    </location>
    <ligand>
        <name>[4Fe-4S] cluster</name>
        <dbReference type="ChEBI" id="CHEBI:49883"/>
        <note>4Fe-4S-S-AdoMet</note>
    </ligand>
</feature>
<feature type="binding site" evidence="1">
    <location>
        <position position="109"/>
    </location>
    <ligand>
        <name>[2Fe-2S] cluster</name>
        <dbReference type="ChEBI" id="CHEBI:190135"/>
    </ligand>
</feature>
<feature type="binding site" evidence="1">
    <location>
        <position position="142"/>
    </location>
    <ligand>
        <name>[2Fe-2S] cluster</name>
        <dbReference type="ChEBI" id="CHEBI:190135"/>
    </ligand>
</feature>
<feature type="binding site" evidence="1">
    <location>
        <position position="201"/>
    </location>
    <ligand>
        <name>[2Fe-2S] cluster</name>
        <dbReference type="ChEBI" id="CHEBI:190135"/>
    </ligand>
</feature>
<feature type="binding site" evidence="1">
    <location>
        <position position="271"/>
    </location>
    <ligand>
        <name>[2Fe-2S] cluster</name>
        <dbReference type="ChEBI" id="CHEBI:190135"/>
    </ligand>
</feature>
<dbReference type="EC" id="2.8.1.6" evidence="1"/>
<dbReference type="EMBL" id="CP000481">
    <property type="protein sequence ID" value="ABK52808.1"/>
    <property type="molecule type" value="Genomic_DNA"/>
</dbReference>
<dbReference type="RefSeq" id="WP_011719871.1">
    <property type="nucleotide sequence ID" value="NC_008578.1"/>
</dbReference>
<dbReference type="SMR" id="A0LTP8"/>
<dbReference type="FunCoup" id="A0LTP8">
    <property type="interactions" value="215"/>
</dbReference>
<dbReference type="STRING" id="351607.Acel_1035"/>
<dbReference type="KEGG" id="ace:Acel_1035"/>
<dbReference type="eggNOG" id="COG0502">
    <property type="taxonomic scope" value="Bacteria"/>
</dbReference>
<dbReference type="HOGENOM" id="CLU_033172_2_1_11"/>
<dbReference type="InParanoid" id="A0LTP8"/>
<dbReference type="OrthoDB" id="9786826at2"/>
<dbReference type="UniPathway" id="UPA00078">
    <property type="reaction ID" value="UER00162"/>
</dbReference>
<dbReference type="Proteomes" id="UP000008221">
    <property type="component" value="Chromosome"/>
</dbReference>
<dbReference type="GO" id="GO:0051537">
    <property type="term" value="F:2 iron, 2 sulfur cluster binding"/>
    <property type="evidence" value="ECO:0007669"/>
    <property type="project" value="UniProtKB-KW"/>
</dbReference>
<dbReference type="GO" id="GO:0051539">
    <property type="term" value="F:4 iron, 4 sulfur cluster binding"/>
    <property type="evidence" value="ECO:0007669"/>
    <property type="project" value="UniProtKB-KW"/>
</dbReference>
<dbReference type="GO" id="GO:0004076">
    <property type="term" value="F:biotin synthase activity"/>
    <property type="evidence" value="ECO:0007669"/>
    <property type="project" value="UniProtKB-UniRule"/>
</dbReference>
<dbReference type="GO" id="GO:0005506">
    <property type="term" value="F:iron ion binding"/>
    <property type="evidence" value="ECO:0007669"/>
    <property type="project" value="UniProtKB-UniRule"/>
</dbReference>
<dbReference type="GO" id="GO:0009102">
    <property type="term" value="P:biotin biosynthetic process"/>
    <property type="evidence" value="ECO:0007669"/>
    <property type="project" value="UniProtKB-UniRule"/>
</dbReference>
<dbReference type="CDD" id="cd01335">
    <property type="entry name" value="Radical_SAM"/>
    <property type="match status" value="1"/>
</dbReference>
<dbReference type="FunFam" id="3.20.20.70:FF:000026">
    <property type="entry name" value="Biotin synthase"/>
    <property type="match status" value="1"/>
</dbReference>
<dbReference type="Gene3D" id="3.20.20.70">
    <property type="entry name" value="Aldolase class I"/>
    <property type="match status" value="1"/>
</dbReference>
<dbReference type="HAMAP" id="MF_01694">
    <property type="entry name" value="BioB"/>
    <property type="match status" value="1"/>
</dbReference>
<dbReference type="InterPro" id="IPR013785">
    <property type="entry name" value="Aldolase_TIM"/>
</dbReference>
<dbReference type="InterPro" id="IPR010722">
    <property type="entry name" value="BATS_dom"/>
</dbReference>
<dbReference type="InterPro" id="IPR002684">
    <property type="entry name" value="Biotin_synth/BioAB"/>
</dbReference>
<dbReference type="InterPro" id="IPR024177">
    <property type="entry name" value="Biotin_synthase"/>
</dbReference>
<dbReference type="InterPro" id="IPR006638">
    <property type="entry name" value="Elp3/MiaA/NifB-like_rSAM"/>
</dbReference>
<dbReference type="InterPro" id="IPR007197">
    <property type="entry name" value="rSAM"/>
</dbReference>
<dbReference type="NCBIfam" id="TIGR00433">
    <property type="entry name" value="bioB"/>
    <property type="match status" value="1"/>
</dbReference>
<dbReference type="PANTHER" id="PTHR22976">
    <property type="entry name" value="BIOTIN SYNTHASE"/>
    <property type="match status" value="1"/>
</dbReference>
<dbReference type="PANTHER" id="PTHR22976:SF2">
    <property type="entry name" value="BIOTIN SYNTHASE, MITOCHONDRIAL"/>
    <property type="match status" value="1"/>
</dbReference>
<dbReference type="Pfam" id="PF06968">
    <property type="entry name" value="BATS"/>
    <property type="match status" value="1"/>
</dbReference>
<dbReference type="Pfam" id="PF04055">
    <property type="entry name" value="Radical_SAM"/>
    <property type="match status" value="1"/>
</dbReference>
<dbReference type="PIRSF" id="PIRSF001619">
    <property type="entry name" value="Biotin_synth"/>
    <property type="match status" value="1"/>
</dbReference>
<dbReference type="SFLD" id="SFLDG01060">
    <property type="entry name" value="BATS_domain_containing"/>
    <property type="match status" value="1"/>
</dbReference>
<dbReference type="SFLD" id="SFLDG01278">
    <property type="entry name" value="biotin_synthase_like"/>
    <property type="match status" value="1"/>
</dbReference>
<dbReference type="SMART" id="SM00876">
    <property type="entry name" value="BATS"/>
    <property type="match status" value="1"/>
</dbReference>
<dbReference type="SMART" id="SM00729">
    <property type="entry name" value="Elp3"/>
    <property type="match status" value="1"/>
</dbReference>
<dbReference type="SUPFAM" id="SSF102114">
    <property type="entry name" value="Radical SAM enzymes"/>
    <property type="match status" value="1"/>
</dbReference>
<dbReference type="PROSITE" id="PS51918">
    <property type="entry name" value="RADICAL_SAM"/>
    <property type="match status" value="1"/>
</dbReference>
<comment type="function">
    <text evidence="1">Catalyzes the conversion of dethiobiotin (DTB) to biotin by the insertion of a sulfur atom into dethiobiotin via a radical-based mechanism.</text>
</comment>
<comment type="catalytic activity">
    <reaction evidence="1">
        <text>(4R,5S)-dethiobiotin + (sulfur carrier)-SH + 2 reduced [2Fe-2S]-[ferredoxin] + 2 S-adenosyl-L-methionine = (sulfur carrier)-H + biotin + 2 5'-deoxyadenosine + 2 L-methionine + 2 oxidized [2Fe-2S]-[ferredoxin]</text>
        <dbReference type="Rhea" id="RHEA:22060"/>
        <dbReference type="Rhea" id="RHEA-COMP:10000"/>
        <dbReference type="Rhea" id="RHEA-COMP:10001"/>
        <dbReference type="Rhea" id="RHEA-COMP:14737"/>
        <dbReference type="Rhea" id="RHEA-COMP:14739"/>
        <dbReference type="ChEBI" id="CHEBI:17319"/>
        <dbReference type="ChEBI" id="CHEBI:29917"/>
        <dbReference type="ChEBI" id="CHEBI:33737"/>
        <dbReference type="ChEBI" id="CHEBI:33738"/>
        <dbReference type="ChEBI" id="CHEBI:57586"/>
        <dbReference type="ChEBI" id="CHEBI:57844"/>
        <dbReference type="ChEBI" id="CHEBI:59789"/>
        <dbReference type="ChEBI" id="CHEBI:64428"/>
        <dbReference type="ChEBI" id="CHEBI:149473"/>
        <dbReference type="EC" id="2.8.1.6"/>
    </reaction>
</comment>
<comment type="cofactor">
    <cofactor evidence="1">
        <name>[4Fe-4S] cluster</name>
        <dbReference type="ChEBI" id="CHEBI:49883"/>
    </cofactor>
    <text evidence="1">Binds 1 [4Fe-4S] cluster. The cluster is coordinated with 3 cysteines and an exchangeable S-adenosyl-L-methionine.</text>
</comment>
<comment type="cofactor">
    <cofactor evidence="1">
        <name>[2Fe-2S] cluster</name>
        <dbReference type="ChEBI" id="CHEBI:190135"/>
    </cofactor>
    <text evidence="1">Binds 1 [2Fe-2S] cluster. The cluster is coordinated with 3 cysteines and 1 arginine.</text>
</comment>
<comment type="pathway">
    <text evidence="1">Cofactor biosynthesis; biotin biosynthesis; biotin from 7,8-diaminononanoate: step 2/2.</text>
</comment>
<comment type="subunit">
    <text evidence="1">Homodimer.</text>
</comment>
<comment type="similarity">
    <text evidence="1">Belongs to the radical SAM superfamily. Biotin synthase family.</text>
</comment>
<proteinExistence type="inferred from homology"/>
<name>BIOB_ACIC1</name>
<reference key="1">
    <citation type="journal article" date="2009" name="Genome Res.">
        <title>Complete genome of the cellulolytic thermophile Acidothermus cellulolyticus 11B provides insights into its ecophysiological and evolutionary adaptations.</title>
        <authorList>
            <person name="Barabote R.D."/>
            <person name="Xie G."/>
            <person name="Leu D.H."/>
            <person name="Normand P."/>
            <person name="Necsulea A."/>
            <person name="Daubin V."/>
            <person name="Medigue C."/>
            <person name="Adney W.S."/>
            <person name="Xu X.C."/>
            <person name="Lapidus A."/>
            <person name="Parales R.E."/>
            <person name="Detter C."/>
            <person name="Pujic P."/>
            <person name="Bruce D."/>
            <person name="Lavire C."/>
            <person name="Challacombe J.F."/>
            <person name="Brettin T.S."/>
            <person name="Berry A.M."/>
        </authorList>
    </citation>
    <scope>NUCLEOTIDE SEQUENCE [LARGE SCALE GENOMIC DNA]</scope>
    <source>
        <strain>ATCC 43068 / DSM 8971 / 11B</strain>
    </source>
</reference>
<sequence>MTDVLASAERVLRDGIGLTEPELRAVLDVDDDSLPRLLDLAHRVRRRWCGPGVEIEGIVSVKTGGCPEDCHFCSQSGRFDSPVRSAWLDIPNLVTAAEQTAATGATEFCIVAAVRGPDDRLMRQVRAAVRAIREAVDINISCSLGILTPDQAAELAEIGVHRYNHNLETARSYFPSVVTTHTWEERWQTLQLVRAAGMEVCCGGILGMGESLDQRAEFAAQLADLDPDEVPLNFLDPRPGTPFADLPVVSVAEALRAAAMFRLALPRTILRFAGGREITLGDAGTRDALRGGVNGLIVGNYLTTLGRDPAADLALLAELGEPIRRSELQALSQAL</sequence>
<keyword id="KW-0001">2Fe-2S</keyword>
<keyword id="KW-0004">4Fe-4S</keyword>
<keyword id="KW-0093">Biotin biosynthesis</keyword>
<keyword id="KW-0408">Iron</keyword>
<keyword id="KW-0411">Iron-sulfur</keyword>
<keyword id="KW-0479">Metal-binding</keyword>
<keyword id="KW-1185">Reference proteome</keyword>
<keyword id="KW-0949">S-adenosyl-L-methionine</keyword>
<keyword id="KW-0808">Transferase</keyword>
<protein>
    <recommendedName>
        <fullName evidence="1">Biotin synthase</fullName>
        <ecNumber evidence="1">2.8.1.6</ecNumber>
    </recommendedName>
</protein>
<gene>
    <name evidence="1" type="primary">bioB</name>
    <name type="ordered locus">Acel_1035</name>
</gene>
<accession>A0LTP8</accession>
<evidence type="ECO:0000255" key="1">
    <source>
        <dbReference type="HAMAP-Rule" id="MF_01694"/>
    </source>
</evidence>
<evidence type="ECO:0000255" key="2">
    <source>
        <dbReference type="PROSITE-ProRule" id="PRU01266"/>
    </source>
</evidence>